<keyword id="KW-0002">3D-structure</keyword>
<keyword id="KW-0963">Cytoplasm</keyword>
<keyword id="KW-0903">Direct protein sequencing</keyword>
<keyword id="KW-0342">GTP-binding</keyword>
<keyword id="KW-1017">Isopeptide bond</keyword>
<keyword id="KW-0436">Ligase</keyword>
<keyword id="KW-0464">Manganese</keyword>
<keyword id="KW-0479">Metal-binding</keyword>
<keyword id="KW-0547">Nucleotide-binding</keyword>
<keyword id="KW-0539">Nucleus</keyword>
<keyword id="KW-0597">Phosphoprotein</keyword>
<keyword id="KW-1267">Proteomics identification</keyword>
<keyword id="KW-1185">Reference proteome</keyword>
<keyword id="KW-0819">tRNA processing</keyword>
<keyword id="KW-0832">Ubl conjugation</keyword>
<feature type="chain" id="PRO_0000255241" description="RNA-splicing ligase RtcB homolog">
    <location>
        <begin position="1"/>
        <end position="505"/>
    </location>
</feature>
<feature type="active site" description="GMP-histidine intermediate" evidence="1 2">
    <location>
        <position position="428"/>
    </location>
</feature>
<feature type="binding site" evidence="1 2">
    <location>
        <position position="119"/>
    </location>
    <ligand>
        <name>Mn(2+)</name>
        <dbReference type="ChEBI" id="CHEBI:29035"/>
        <label>1</label>
    </ligand>
</feature>
<feature type="binding site" evidence="1 2">
    <location>
        <position position="122"/>
    </location>
    <ligand>
        <name>Mn(2+)</name>
        <dbReference type="ChEBI" id="CHEBI:29035"/>
        <label>1</label>
    </ligand>
</feature>
<feature type="binding site" evidence="1 2">
    <location>
        <position position="122"/>
    </location>
    <ligand>
        <name>Mn(2+)</name>
        <dbReference type="ChEBI" id="CHEBI:29035"/>
        <label>2</label>
    </ligand>
</feature>
<feature type="binding site" evidence="1 2">
    <location>
        <begin position="226"/>
        <end position="230"/>
    </location>
    <ligand>
        <name>GMP</name>
        <dbReference type="ChEBI" id="CHEBI:58115"/>
    </ligand>
</feature>
<feature type="binding site" evidence="1 2">
    <location>
        <position position="227"/>
    </location>
    <ligand>
        <name>Mn(2+)</name>
        <dbReference type="ChEBI" id="CHEBI:29035"/>
        <label>1</label>
    </ligand>
</feature>
<feature type="binding site" evidence="1 2">
    <location>
        <position position="259"/>
    </location>
    <ligand>
        <name>Mn(2+)</name>
        <dbReference type="ChEBI" id="CHEBI:29035"/>
        <label>2</label>
    </ligand>
</feature>
<feature type="binding site" evidence="1 2">
    <location>
        <begin position="353"/>
        <end position="354"/>
    </location>
    <ligand>
        <name>GMP</name>
        <dbReference type="ChEBI" id="CHEBI:58115"/>
    </ligand>
</feature>
<feature type="binding site" evidence="1 2">
    <location>
        <position position="353"/>
    </location>
    <ligand>
        <name>Mn(2+)</name>
        <dbReference type="ChEBI" id="CHEBI:29035"/>
        <label>2</label>
    </ligand>
</feature>
<feature type="binding site" evidence="1 2">
    <location>
        <begin position="402"/>
        <end position="405"/>
    </location>
    <ligand>
        <name>GMP</name>
        <dbReference type="ChEBI" id="CHEBI:58115"/>
    </ligand>
</feature>
<feature type="binding site" evidence="1 2">
    <location>
        <position position="409"/>
    </location>
    <ligand>
        <name>GMP</name>
        <dbReference type="ChEBI" id="CHEBI:58115"/>
    </ligand>
</feature>
<feature type="binding site" evidence="1 2">
    <location>
        <begin position="428"/>
        <end position="431"/>
    </location>
    <ligand>
        <name>GMP</name>
        <dbReference type="ChEBI" id="CHEBI:58115"/>
    </ligand>
</feature>
<feature type="binding site" evidence="1 2">
    <location>
        <position position="504"/>
    </location>
    <ligand>
        <name>GMP</name>
        <dbReference type="ChEBI" id="CHEBI:58115"/>
    </ligand>
</feature>
<feature type="modified residue" description="Phosphoserine" evidence="11">
    <location>
        <position position="300"/>
    </location>
</feature>
<feature type="cross-link" description="Glycyl lysine isopeptide (Lys-Gly) (interchain with G-Cter in SUMO2)" evidence="12">
    <location>
        <position position="496"/>
    </location>
</feature>
<feature type="sequence variant" id="VAR_052485" description="In dbSNP:rs11545747.">
    <original>V</original>
    <variation>A</variation>
    <location>
        <position position="153"/>
    </location>
</feature>
<feature type="sequence variant" id="VAR_028853" description="In dbSNP:rs17849275." evidence="4">
    <original>L</original>
    <variation>F</variation>
    <location>
        <position position="343"/>
    </location>
</feature>
<feature type="mutagenesis site" description="Abolishes tRNA ligase activity." evidence="5">
    <original>C</original>
    <variation>A</variation>
    <location>
        <position position="122"/>
    </location>
</feature>
<feature type="sequence conflict" description="In Ref. 2; AAF29081." evidence="8" ref="2">
    <original>A</original>
    <variation>P</variation>
    <location>
        <position position="296"/>
    </location>
</feature>
<feature type="sequence conflict" description="In Ref. 2; AAF29081 and 3; AAF67477." evidence="8" ref="2 3">
    <original>G</original>
    <variation>V</variation>
    <location>
        <position position="303"/>
    </location>
</feature>
<feature type="sequence conflict" description="In Ref. 4; CAG33456." evidence="8" ref="4">
    <original>C</original>
    <variation>R</variation>
    <location>
        <position position="427"/>
    </location>
</feature>
<feature type="helix" evidence="13">
    <location>
        <begin position="5"/>
        <end position="9"/>
    </location>
</feature>
<feature type="strand" evidence="13">
    <location>
        <begin position="12"/>
        <end position="16"/>
    </location>
</feature>
<feature type="strand" evidence="13">
    <location>
        <begin position="19"/>
        <end position="22"/>
    </location>
</feature>
<feature type="strand" evidence="13">
    <location>
        <begin position="31"/>
        <end position="36"/>
    </location>
</feature>
<feature type="helix" evidence="13">
    <location>
        <begin position="40"/>
        <end position="52"/>
    </location>
</feature>
<feature type="strand" evidence="13">
    <location>
        <begin position="56"/>
        <end position="59"/>
    </location>
</feature>
<feature type="helix" evidence="13">
    <location>
        <begin position="65"/>
        <end position="72"/>
    </location>
</feature>
<feature type="strand" evidence="13">
    <location>
        <begin position="80"/>
        <end position="89"/>
    </location>
</feature>
<feature type="strand" evidence="13">
    <location>
        <begin position="92"/>
        <end position="94"/>
    </location>
</feature>
<feature type="strand" evidence="13">
    <location>
        <begin position="96"/>
        <end position="103"/>
    </location>
</feature>
<feature type="helix" evidence="13">
    <location>
        <begin position="113"/>
        <end position="116"/>
    </location>
</feature>
<feature type="strand" evidence="13">
    <location>
        <begin position="123"/>
        <end position="132"/>
    </location>
</feature>
<feature type="helix" evidence="13">
    <location>
        <begin position="133"/>
        <end position="136"/>
    </location>
</feature>
<feature type="helix" evidence="13">
    <location>
        <begin position="137"/>
        <end position="139"/>
    </location>
</feature>
<feature type="helix" evidence="13">
    <location>
        <begin position="140"/>
        <end position="150"/>
    </location>
</feature>
<feature type="helix" evidence="13">
    <location>
        <begin position="165"/>
        <end position="174"/>
    </location>
</feature>
<feature type="helix" evidence="13">
    <location>
        <begin position="176"/>
        <end position="181"/>
    </location>
</feature>
<feature type="helix" evidence="13">
    <location>
        <begin position="187"/>
        <end position="191"/>
    </location>
</feature>
<feature type="helix" evidence="13">
    <location>
        <begin position="194"/>
        <end position="197"/>
    </location>
</feature>
<feature type="helix" evidence="13">
    <location>
        <begin position="204"/>
        <end position="206"/>
    </location>
</feature>
<feature type="helix" evidence="13">
    <location>
        <begin position="209"/>
        <end position="218"/>
    </location>
</feature>
<feature type="strand" evidence="13">
    <location>
        <begin position="228"/>
        <end position="238"/>
    </location>
</feature>
<feature type="helix" evidence="13">
    <location>
        <begin position="240"/>
        <end position="246"/>
    </location>
</feature>
<feature type="strand" evidence="13">
    <location>
        <begin position="253"/>
        <end position="260"/>
    </location>
</feature>
<feature type="helix" evidence="13">
    <location>
        <begin position="263"/>
        <end position="283"/>
    </location>
</feature>
<feature type="helix" evidence="13">
    <location>
        <begin position="291"/>
        <end position="293"/>
    </location>
</feature>
<feature type="helix" evidence="13">
    <location>
        <begin position="301"/>
        <end position="336"/>
    </location>
</feature>
<feature type="turn" evidence="13">
    <location>
        <begin position="340"/>
        <end position="344"/>
    </location>
</feature>
<feature type="strand" evidence="13">
    <location>
        <begin position="347"/>
        <end position="352"/>
    </location>
</feature>
<feature type="strand" evidence="13">
    <location>
        <begin position="354"/>
        <end position="363"/>
    </location>
</feature>
<feature type="strand" evidence="13">
    <location>
        <begin position="366"/>
        <end position="379"/>
    </location>
</feature>
<feature type="helix" evidence="13">
    <location>
        <begin position="390"/>
        <end position="392"/>
    </location>
</feature>
<feature type="turn" evidence="13">
    <location>
        <begin position="393"/>
        <end position="395"/>
    </location>
</feature>
<feature type="strand" evidence="13">
    <location>
        <begin position="398"/>
        <end position="402"/>
    </location>
</feature>
<feature type="strand" evidence="13">
    <location>
        <begin position="409"/>
        <end position="413"/>
    </location>
</feature>
<feature type="helix" evidence="13">
    <location>
        <begin position="416"/>
        <end position="421"/>
    </location>
</feature>
<feature type="strand" evidence="13">
    <location>
        <begin position="422"/>
        <end position="429"/>
    </location>
</feature>
<feature type="strand" evidence="13">
    <location>
        <begin position="432"/>
        <end position="434"/>
    </location>
</feature>
<feature type="helix" evidence="13">
    <location>
        <begin position="436"/>
        <end position="442"/>
    </location>
</feature>
<feature type="helix" evidence="13">
    <location>
        <begin position="445"/>
        <end position="454"/>
    </location>
</feature>
<feature type="strand" evidence="13">
    <location>
        <begin position="458"/>
        <end position="462"/>
    </location>
</feature>
<feature type="helix" evidence="13">
    <location>
        <begin position="464"/>
        <end position="470"/>
    </location>
</feature>
<feature type="helix" evidence="13">
    <location>
        <begin position="472"/>
        <end position="474"/>
    </location>
</feature>
<feature type="helix" evidence="13">
    <location>
        <begin position="478"/>
        <end position="487"/>
    </location>
</feature>
<feature type="strand" evidence="13">
    <location>
        <begin position="490"/>
        <end position="504"/>
    </location>
</feature>
<reference key="1">
    <citation type="journal article" date="2003" name="Genome Res.">
        <title>Reevaluating human gene annotation: a second-generation analysis of chromosome 22.</title>
        <authorList>
            <person name="Collins J.E."/>
            <person name="Goward M.E."/>
            <person name="Cole C.G."/>
            <person name="Smink L.J."/>
            <person name="Huckle E.J."/>
            <person name="Knowles S."/>
            <person name="Bye J.M."/>
            <person name="Beare D.M."/>
            <person name="Dunham I."/>
        </authorList>
    </citation>
    <scope>NUCLEOTIDE SEQUENCE [LARGE SCALE MRNA]</scope>
</reference>
<reference key="2">
    <citation type="journal article" date="2000" name="Genome Res.">
        <title>Cloning and functional analysis of cDNAs with open reading frames for 300 previously undefined genes expressed in CD34+ hematopoietic stem/progenitor cells.</title>
        <authorList>
            <person name="Zhang Q.-H."/>
            <person name="Ye M."/>
            <person name="Wu X.-Y."/>
            <person name="Ren S.-X."/>
            <person name="Zhao M."/>
            <person name="Zhao C.-J."/>
            <person name="Fu G."/>
            <person name="Shen Y."/>
            <person name="Fan H.-Y."/>
            <person name="Lu G."/>
            <person name="Zhong M."/>
            <person name="Xu X.-R."/>
            <person name="Han Z.-G."/>
            <person name="Zhang J.-W."/>
            <person name="Tao J."/>
            <person name="Huang Q.-H."/>
            <person name="Zhou J."/>
            <person name="Hu G.-X."/>
            <person name="Gu J."/>
            <person name="Chen S.-J."/>
            <person name="Chen Z."/>
        </authorList>
    </citation>
    <scope>NUCLEOTIDE SEQUENCE [LARGE SCALE MRNA]</scope>
    <source>
        <tissue>Umbilical cord blood</tissue>
    </source>
</reference>
<reference key="3">
    <citation type="journal article" date="2000" name="Proc. Natl. Acad. Sci. U.S.A.">
        <title>Gene expression profiling in the human hypothalamus-pituitary-adrenal axis and full-length cDNA cloning.</title>
        <authorList>
            <person name="Hu R.-M."/>
            <person name="Han Z.-G."/>
            <person name="Song H.-D."/>
            <person name="Peng Y.-D."/>
            <person name="Huang Q.-H."/>
            <person name="Ren S.-X."/>
            <person name="Gu Y.-J."/>
            <person name="Huang C.-H."/>
            <person name="Li Y.-B."/>
            <person name="Jiang C.-L."/>
            <person name="Fu G."/>
            <person name="Zhang Q.-H."/>
            <person name="Gu B.-W."/>
            <person name="Dai M."/>
            <person name="Mao Y.-F."/>
            <person name="Gao G.-F."/>
            <person name="Rong R."/>
            <person name="Ye M."/>
            <person name="Zhou J."/>
            <person name="Xu S.-H."/>
            <person name="Gu J."/>
            <person name="Shi J.-X."/>
            <person name="Jin W.-R."/>
            <person name="Zhang C.-K."/>
            <person name="Wu T.-M."/>
            <person name="Huang G.-Y."/>
            <person name="Chen Z."/>
            <person name="Chen M.-D."/>
            <person name="Chen J.-L."/>
        </authorList>
    </citation>
    <scope>NUCLEOTIDE SEQUENCE [LARGE SCALE MRNA]</scope>
    <source>
        <tissue>Adrenal gland</tissue>
    </source>
</reference>
<reference key="4">
    <citation type="submission" date="2004-06" db="EMBL/GenBank/DDBJ databases">
        <title>Cloning of human full open reading frames in Gateway(TM) system entry vector (pDONR201).</title>
        <authorList>
            <person name="Ebert L."/>
            <person name="Schick M."/>
            <person name="Neubert P."/>
            <person name="Schatten R."/>
            <person name="Henze S."/>
            <person name="Korn B."/>
        </authorList>
    </citation>
    <scope>NUCLEOTIDE SEQUENCE [LARGE SCALE MRNA]</scope>
</reference>
<reference key="5">
    <citation type="journal article" date="2004" name="Genome Biol.">
        <title>A genome annotation-driven approach to cloning the human ORFeome.</title>
        <authorList>
            <person name="Collins J.E."/>
            <person name="Wright C.L."/>
            <person name="Edwards C.A."/>
            <person name="Davis M.P."/>
            <person name="Grinham J.A."/>
            <person name="Cole C.G."/>
            <person name="Goward M.E."/>
            <person name="Aguado B."/>
            <person name="Mallya M."/>
            <person name="Mokrab Y."/>
            <person name="Huckle E.J."/>
            <person name="Beare D.M."/>
            <person name="Dunham I."/>
        </authorList>
    </citation>
    <scope>NUCLEOTIDE SEQUENCE [LARGE SCALE MRNA]</scope>
</reference>
<reference key="6">
    <citation type="journal article" date="2004" name="Nat. Genet.">
        <title>Complete sequencing and characterization of 21,243 full-length human cDNAs.</title>
        <authorList>
            <person name="Ota T."/>
            <person name="Suzuki Y."/>
            <person name="Nishikawa T."/>
            <person name="Otsuki T."/>
            <person name="Sugiyama T."/>
            <person name="Irie R."/>
            <person name="Wakamatsu A."/>
            <person name="Hayashi K."/>
            <person name="Sato H."/>
            <person name="Nagai K."/>
            <person name="Kimura K."/>
            <person name="Makita H."/>
            <person name="Sekine M."/>
            <person name="Obayashi M."/>
            <person name="Nishi T."/>
            <person name="Shibahara T."/>
            <person name="Tanaka T."/>
            <person name="Ishii S."/>
            <person name="Yamamoto J."/>
            <person name="Saito K."/>
            <person name="Kawai Y."/>
            <person name="Isono Y."/>
            <person name="Nakamura Y."/>
            <person name="Nagahari K."/>
            <person name="Murakami K."/>
            <person name="Yasuda T."/>
            <person name="Iwayanagi T."/>
            <person name="Wagatsuma M."/>
            <person name="Shiratori A."/>
            <person name="Sudo H."/>
            <person name="Hosoiri T."/>
            <person name="Kaku Y."/>
            <person name="Kodaira H."/>
            <person name="Kondo H."/>
            <person name="Sugawara M."/>
            <person name="Takahashi M."/>
            <person name="Kanda K."/>
            <person name="Yokoi T."/>
            <person name="Furuya T."/>
            <person name="Kikkawa E."/>
            <person name="Omura Y."/>
            <person name="Abe K."/>
            <person name="Kamihara K."/>
            <person name="Katsuta N."/>
            <person name="Sato K."/>
            <person name="Tanikawa M."/>
            <person name="Yamazaki M."/>
            <person name="Ninomiya K."/>
            <person name="Ishibashi T."/>
            <person name="Yamashita H."/>
            <person name="Murakawa K."/>
            <person name="Fujimori K."/>
            <person name="Tanai H."/>
            <person name="Kimata M."/>
            <person name="Watanabe M."/>
            <person name="Hiraoka S."/>
            <person name="Chiba Y."/>
            <person name="Ishida S."/>
            <person name="Ono Y."/>
            <person name="Takiguchi S."/>
            <person name="Watanabe S."/>
            <person name="Yosida M."/>
            <person name="Hotuta T."/>
            <person name="Kusano J."/>
            <person name="Kanehori K."/>
            <person name="Takahashi-Fujii A."/>
            <person name="Hara H."/>
            <person name="Tanase T.-O."/>
            <person name="Nomura Y."/>
            <person name="Togiya S."/>
            <person name="Komai F."/>
            <person name="Hara R."/>
            <person name="Takeuchi K."/>
            <person name="Arita M."/>
            <person name="Imose N."/>
            <person name="Musashino K."/>
            <person name="Yuuki H."/>
            <person name="Oshima A."/>
            <person name="Sasaki N."/>
            <person name="Aotsuka S."/>
            <person name="Yoshikawa Y."/>
            <person name="Matsunawa H."/>
            <person name="Ichihara T."/>
            <person name="Shiohata N."/>
            <person name="Sano S."/>
            <person name="Moriya S."/>
            <person name="Momiyama H."/>
            <person name="Satoh N."/>
            <person name="Takami S."/>
            <person name="Terashima Y."/>
            <person name="Suzuki O."/>
            <person name="Nakagawa S."/>
            <person name="Senoh A."/>
            <person name="Mizoguchi H."/>
            <person name="Goto Y."/>
            <person name="Shimizu F."/>
            <person name="Wakebe H."/>
            <person name="Hishigaki H."/>
            <person name="Watanabe T."/>
            <person name="Sugiyama A."/>
            <person name="Takemoto M."/>
            <person name="Kawakami B."/>
            <person name="Yamazaki M."/>
            <person name="Watanabe K."/>
            <person name="Kumagai A."/>
            <person name="Itakura S."/>
            <person name="Fukuzumi Y."/>
            <person name="Fujimori Y."/>
            <person name="Komiyama M."/>
            <person name="Tashiro H."/>
            <person name="Tanigami A."/>
            <person name="Fujiwara T."/>
            <person name="Ono T."/>
            <person name="Yamada K."/>
            <person name="Fujii Y."/>
            <person name="Ozaki K."/>
            <person name="Hirao M."/>
            <person name="Ohmori Y."/>
            <person name="Kawabata A."/>
            <person name="Hikiji T."/>
            <person name="Kobatake N."/>
            <person name="Inagaki H."/>
            <person name="Ikema Y."/>
            <person name="Okamoto S."/>
            <person name="Okitani R."/>
            <person name="Kawakami T."/>
            <person name="Noguchi S."/>
            <person name="Itoh T."/>
            <person name="Shigeta K."/>
            <person name="Senba T."/>
            <person name="Matsumura K."/>
            <person name="Nakajima Y."/>
            <person name="Mizuno T."/>
            <person name="Morinaga M."/>
            <person name="Sasaki M."/>
            <person name="Togashi T."/>
            <person name="Oyama M."/>
            <person name="Hata H."/>
            <person name="Watanabe M."/>
            <person name="Komatsu T."/>
            <person name="Mizushima-Sugano J."/>
            <person name="Satoh T."/>
            <person name="Shirai Y."/>
            <person name="Takahashi Y."/>
            <person name="Nakagawa K."/>
            <person name="Okumura K."/>
            <person name="Nagase T."/>
            <person name="Nomura N."/>
            <person name="Kikuchi H."/>
            <person name="Masuho Y."/>
            <person name="Yamashita R."/>
            <person name="Nakai K."/>
            <person name="Yada T."/>
            <person name="Nakamura Y."/>
            <person name="Ohara O."/>
            <person name="Isogai T."/>
            <person name="Sugano S."/>
        </authorList>
    </citation>
    <scope>NUCLEOTIDE SEQUENCE [LARGE SCALE MRNA]</scope>
    <source>
        <tissue>Thalamus</tissue>
    </source>
</reference>
<reference key="7">
    <citation type="journal article" date="1999" name="Nature">
        <title>The DNA sequence of human chromosome 22.</title>
        <authorList>
            <person name="Dunham I."/>
            <person name="Hunt A.R."/>
            <person name="Collins J.E."/>
            <person name="Bruskiewich R."/>
            <person name="Beare D.M."/>
            <person name="Clamp M."/>
            <person name="Smink L.J."/>
            <person name="Ainscough R."/>
            <person name="Almeida J.P."/>
            <person name="Babbage A.K."/>
            <person name="Bagguley C."/>
            <person name="Bailey J."/>
            <person name="Barlow K.F."/>
            <person name="Bates K.N."/>
            <person name="Beasley O.P."/>
            <person name="Bird C.P."/>
            <person name="Blakey S.E."/>
            <person name="Bridgeman A.M."/>
            <person name="Buck D."/>
            <person name="Burgess J."/>
            <person name="Burrill W.D."/>
            <person name="Burton J."/>
            <person name="Carder C."/>
            <person name="Carter N.P."/>
            <person name="Chen Y."/>
            <person name="Clark G."/>
            <person name="Clegg S.M."/>
            <person name="Cobley V.E."/>
            <person name="Cole C.G."/>
            <person name="Collier R.E."/>
            <person name="Connor R."/>
            <person name="Conroy D."/>
            <person name="Corby N.R."/>
            <person name="Coville G.J."/>
            <person name="Cox A.V."/>
            <person name="Davis J."/>
            <person name="Dawson E."/>
            <person name="Dhami P.D."/>
            <person name="Dockree C."/>
            <person name="Dodsworth S.J."/>
            <person name="Durbin R.M."/>
            <person name="Ellington A.G."/>
            <person name="Evans K.L."/>
            <person name="Fey J.M."/>
            <person name="Fleming K."/>
            <person name="French L."/>
            <person name="Garner A.A."/>
            <person name="Gilbert J.G.R."/>
            <person name="Goward M.E."/>
            <person name="Grafham D.V."/>
            <person name="Griffiths M.N.D."/>
            <person name="Hall C."/>
            <person name="Hall R.E."/>
            <person name="Hall-Tamlyn G."/>
            <person name="Heathcott R.W."/>
            <person name="Ho S."/>
            <person name="Holmes S."/>
            <person name="Hunt S.E."/>
            <person name="Jones M.C."/>
            <person name="Kershaw J."/>
            <person name="Kimberley A.M."/>
            <person name="King A."/>
            <person name="Laird G.K."/>
            <person name="Langford C.F."/>
            <person name="Leversha M.A."/>
            <person name="Lloyd C."/>
            <person name="Lloyd D.M."/>
            <person name="Martyn I.D."/>
            <person name="Mashreghi-Mohammadi M."/>
            <person name="Matthews L.H."/>
            <person name="Mccann O.T."/>
            <person name="Mcclay J."/>
            <person name="Mclaren S."/>
            <person name="McMurray A.A."/>
            <person name="Milne S.A."/>
            <person name="Mortimore B.J."/>
            <person name="Odell C.N."/>
            <person name="Pavitt R."/>
            <person name="Pearce A.V."/>
            <person name="Pearson D."/>
            <person name="Phillimore B.J.C.T."/>
            <person name="Phillips S.H."/>
            <person name="Plumb R.W."/>
            <person name="Ramsay H."/>
            <person name="Ramsey Y."/>
            <person name="Rogers L."/>
            <person name="Ross M.T."/>
            <person name="Scott C.E."/>
            <person name="Sehra H.K."/>
            <person name="Skuce C.D."/>
            <person name="Smalley S."/>
            <person name="Smith M.L."/>
            <person name="Soderlund C."/>
            <person name="Spragon L."/>
            <person name="Steward C.A."/>
            <person name="Sulston J.E."/>
            <person name="Swann R.M."/>
            <person name="Vaudin M."/>
            <person name="Wall M."/>
            <person name="Wallis J.M."/>
            <person name="Whiteley M.N."/>
            <person name="Willey D.L."/>
            <person name="Williams L."/>
            <person name="Williams S.A."/>
            <person name="Williamson H."/>
            <person name="Wilmer T.E."/>
            <person name="Wilming L."/>
            <person name="Wright C.L."/>
            <person name="Hubbard T."/>
            <person name="Bentley D.R."/>
            <person name="Beck S."/>
            <person name="Rogers J."/>
            <person name="Shimizu N."/>
            <person name="Minoshima S."/>
            <person name="Kawasaki K."/>
            <person name="Sasaki T."/>
            <person name="Asakawa S."/>
            <person name="Kudoh J."/>
            <person name="Shintani A."/>
            <person name="Shibuya K."/>
            <person name="Yoshizaki Y."/>
            <person name="Aoki N."/>
            <person name="Mitsuyama S."/>
            <person name="Roe B.A."/>
            <person name="Chen F."/>
            <person name="Chu L."/>
            <person name="Crabtree J."/>
            <person name="Deschamps S."/>
            <person name="Do A."/>
            <person name="Do T."/>
            <person name="Dorman A."/>
            <person name="Fang F."/>
            <person name="Fu Y."/>
            <person name="Hu P."/>
            <person name="Hua A."/>
            <person name="Kenton S."/>
            <person name="Lai H."/>
            <person name="Lao H.I."/>
            <person name="Lewis J."/>
            <person name="Lewis S."/>
            <person name="Lin S.-P."/>
            <person name="Loh P."/>
            <person name="Malaj E."/>
            <person name="Nguyen T."/>
            <person name="Pan H."/>
            <person name="Phan S."/>
            <person name="Qi S."/>
            <person name="Qian Y."/>
            <person name="Ray L."/>
            <person name="Ren Q."/>
            <person name="Shaull S."/>
            <person name="Sloan D."/>
            <person name="Song L."/>
            <person name="Wang Q."/>
            <person name="Wang Y."/>
            <person name="Wang Z."/>
            <person name="White J."/>
            <person name="Willingham D."/>
            <person name="Wu H."/>
            <person name="Yao Z."/>
            <person name="Zhan M."/>
            <person name="Zhang G."/>
            <person name="Chissoe S."/>
            <person name="Murray J."/>
            <person name="Miller N."/>
            <person name="Minx P."/>
            <person name="Fulton R."/>
            <person name="Johnson D."/>
            <person name="Bemis G."/>
            <person name="Bentley D."/>
            <person name="Bradshaw H."/>
            <person name="Bourne S."/>
            <person name="Cordes M."/>
            <person name="Du Z."/>
            <person name="Fulton L."/>
            <person name="Goela D."/>
            <person name="Graves T."/>
            <person name="Hawkins J."/>
            <person name="Hinds K."/>
            <person name="Kemp K."/>
            <person name="Latreille P."/>
            <person name="Layman D."/>
            <person name="Ozersky P."/>
            <person name="Rohlfing T."/>
            <person name="Scheet P."/>
            <person name="Walker C."/>
            <person name="Wamsley A."/>
            <person name="Wohldmann P."/>
            <person name="Pepin K."/>
            <person name="Nelson J."/>
            <person name="Korf I."/>
            <person name="Bedell J.A."/>
            <person name="Hillier L.W."/>
            <person name="Mardis E."/>
            <person name="Waterston R."/>
            <person name="Wilson R."/>
            <person name="Emanuel B.S."/>
            <person name="Shaikh T."/>
            <person name="Kurahashi H."/>
            <person name="Saitta S."/>
            <person name="Budarf M.L."/>
            <person name="McDermid H.E."/>
            <person name="Johnson A."/>
            <person name="Wong A.C.C."/>
            <person name="Morrow B.E."/>
            <person name="Edelmann L."/>
            <person name="Kim U.J."/>
            <person name="Shizuya H."/>
            <person name="Simon M.I."/>
            <person name="Dumanski J.P."/>
            <person name="Peyrard M."/>
            <person name="Kedra D."/>
            <person name="Seroussi E."/>
            <person name="Fransson I."/>
            <person name="Tapia I."/>
            <person name="Bruder C.E."/>
            <person name="O'Brien K.P."/>
            <person name="Wilkinson P."/>
            <person name="Bodenteich A."/>
            <person name="Hartman K."/>
            <person name="Hu X."/>
            <person name="Khan A.S."/>
            <person name="Lane L."/>
            <person name="Tilahun Y."/>
            <person name="Wright H."/>
        </authorList>
    </citation>
    <scope>NUCLEOTIDE SEQUENCE [LARGE SCALE GENOMIC DNA]</scope>
</reference>
<reference key="8">
    <citation type="submission" date="2005-07" db="EMBL/GenBank/DDBJ databases">
        <authorList>
            <person name="Mural R.J."/>
            <person name="Istrail S."/>
            <person name="Sutton G.G."/>
            <person name="Florea L."/>
            <person name="Halpern A.L."/>
            <person name="Mobarry C.M."/>
            <person name="Lippert R."/>
            <person name="Walenz B."/>
            <person name="Shatkay H."/>
            <person name="Dew I."/>
            <person name="Miller J.R."/>
            <person name="Flanigan M.J."/>
            <person name="Edwards N.J."/>
            <person name="Bolanos R."/>
            <person name="Fasulo D."/>
            <person name="Halldorsson B.V."/>
            <person name="Hannenhalli S."/>
            <person name="Turner R."/>
            <person name="Yooseph S."/>
            <person name="Lu F."/>
            <person name="Nusskern D.R."/>
            <person name="Shue B.C."/>
            <person name="Zheng X.H."/>
            <person name="Zhong F."/>
            <person name="Delcher A.L."/>
            <person name="Huson D.H."/>
            <person name="Kravitz S.A."/>
            <person name="Mouchard L."/>
            <person name="Reinert K."/>
            <person name="Remington K.A."/>
            <person name="Clark A.G."/>
            <person name="Waterman M.S."/>
            <person name="Eichler E.E."/>
            <person name="Adams M.D."/>
            <person name="Hunkapiller M.W."/>
            <person name="Myers E.W."/>
            <person name="Venter J.C."/>
        </authorList>
    </citation>
    <scope>NUCLEOTIDE SEQUENCE [LARGE SCALE GENOMIC DNA]</scope>
</reference>
<reference key="9">
    <citation type="journal article" date="2004" name="Genome Res.">
        <title>The status, quality, and expansion of the NIH full-length cDNA project: the Mammalian Gene Collection (MGC).</title>
        <authorList>
            <consortium name="The MGC Project Team"/>
        </authorList>
    </citation>
    <scope>NUCLEOTIDE SEQUENCE [LARGE SCALE MRNA]</scope>
    <scope>VARIANT PHE-343</scope>
    <source>
        <tissue>Choriocarcinoma</tissue>
        <tissue>Lung carcinoma</tissue>
    </source>
</reference>
<reference key="10">
    <citation type="submission" date="2007-07" db="UniProtKB">
        <authorList>
            <person name="Bienvenut W.V."/>
            <person name="Boldt K."/>
            <person name="von Kriegsheim A.F."/>
            <person name="Kolch W."/>
        </authorList>
    </citation>
    <scope>PROTEIN SEQUENCE OF 4-14; 45-51; 56-81; 141-158; 199-206; 264-279; 298-308; 442-460 AND 466-476</scope>
    <scope>IDENTIFICATION BY MASS SPECTROMETRY</scope>
    <source>
        <tissue>Hepatoma</tissue>
    </source>
</reference>
<reference key="11">
    <citation type="journal article" date="2007" name="BMC Genomics">
        <title>The full-ORF clone resource of the German cDNA consortium.</title>
        <authorList>
            <person name="Bechtel S."/>
            <person name="Rosenfelder H."/>
            <person name="Duda A."/>
            <person name="Schmidt C.P."/>
            <person name="Ernst U."/>
            <person name="Wellenreuther R."/>
            <person name="Mehrle A."/>
            <person name="Schuster C."/>
            <person name="Bahr A."/>
            <person name="Bloecker H."/>
            <person name="Heubner D."/>
            <person name="Hoerlein A."/>
            <person name="Michel G."/>
            <person name="Wedler H."/>
            <person name="Koehrer K."/>
            <person name="Ottenwaelder B."/>
            <person name="Poustka A."/>
            <person name="Wiemann S."/>
            <person name="Schupp I."/>
        </authorList>
    </citation>
    <scope>NUCLEOTIDE SEQUENCE [LARGE SCALE MRNA] OF 309-505</scope>
    <source>
        <tissue>Testis</tissue>
    </source>
</reference>
<reference key="12">
    <citation type="journal article" date="2003" name="Nature">
        <title>Proteomic characterization of the human centrosome by protein correlation profiling.</title>
        <authorList>
            <person name="Andersen J.S."/>
            <person name="Wilkinson C.J."/>
            <person name="Mayor T."/>
            <person name="Mortensen P."/>
            <person name="Nigg E.A."/>
            <person name="Mann M."/>
        </authorList>
    </citation>
    <scope>IDENTIFICATION BY MASS SPECTROMETRY</scope>
    <source>
        <tissue>Lymphoblast</tissue>
    </source>
</reference>
<reference key="13">
    <citation type="journal article" date="2004" name="Neuron">
        <title>Kinesin transports RNA: isolation and characterization of an RNA-transporting granule.</title>
        <authorList>
            <person name="Kanai Y."/>
            <person name="Dohmae N."/>
            <person name="Hirokawa N."/>
        </authorList>
    </citation>
    <scope>IDENTIFICATION IN A RNA TRANSPORT COMPLEX</scope>
</reference>
<reference key="14">
    <citation type="journal article" date="2005" name="Biochem. Biophys. Res. Commun.">
        <title>Proteomic analysis of SUMO4 substrates in HEK293 cells under serum starvation-induced stress.</title>
        <authorList>
            <person name="Guo D."/>
            <person name="Han J."/>
            <person name="Adam B.-L."/>
            <person name="Colburn N.H."/>
            <person name="Wang M.-H."/>
            <person name="Dong Z."/>
            <person name="Eizirik D.L."/>
            <person name="She J.-X."/>
            <person name="Wang C.-Y."/>
        </authorList>
    </citation>
    <scope>IDENTIFICATION BY MASS SPECTROMETRY</scope>
</reference>
<reference key="15">
    <citation type="journal article" date="2011" name="BMC Syst. Biol.">
        <title>Initial characterization of the human central proteome.</title>
        <authorList>
            <person name="Burkard T.R."/>
            <person name="Planyavsky M."/>
            <person name="Kaupe I."/>
            <person name="Breitwieser F.P."/>
            <person name="Buerckstuemmer T."/>
            <person name="Bennett K.L."/>
            <person name="Superti-Furga G."/>
            <person name="Colinge J."/>
        </authorList>
    </citation>
    <scope>IDENTIFICATION BY MASS SPECTROMETRY [LARGE SCALE ANALYSIS]</scope>
</reference>
<reference key="16">
    <citation type="journal article" date="2011" name="Science">
        <title>HSPC117 is the essential subunit of a human tRNA splicing ligase complex.</title>
        <authorList>
            <person name="Popow J."/>
            <person name="Englert M."/>
            <person name="Weitzer S."/>
            <person name="Schleiffer A."/>
            <person name="Mierzwa B."/>
            <person name="Mechtler K."/>
            <person name="Trowitzsch S."/>
            <person name="Will C.L."/>
            <person name="Luhrmann R."/>
            <person name="Soll D."/>
            <person name="Martinez J."/>
        </authorList>
    </citation>
    <scope>FUNCTION</scope>
    <scope>CATALYTIC ACTIVITY</scope>
    <scope>IDENTIFICATION BY MASS SPECTROMETRY</scope>
    <scope>IDENTIFICATION IN THE TRNA SPLICING LIGASE COMPLEX</scope>
    <scope>MUTAGENESIS OF CYS-122</scope>
</reference>
<reference key="17">
    <citation type="journal article" date="2013" name="J. Proteome Res.">
        <title>Toward a comprehensive characterization of a human cancer cell phosphoproteome.</title>
        <authorList>
            <person name="Zhou H."/>
            <person name="Di Palma S."/>
            <person name="Preisinger C."/>
            <person name="Peng M."/>
            <person name="Polat A.N."/>
            <person name="Heck A.J."/>
            <person name="Mohammed S."/>
        </authorList>
    </citation>
    <scope>PHOSPHORYLATION [LARGE SCALE ANALYSIS] AT SER-300</scope>
    <scope>IDENTIFICATION BY MASS SPECTROMETRY [LARGE SCALE ANALYSIS]</scope>
    <source>
        <tissue>Cervix carcinoma</tissue>
        <tissue>Erythroleukemia</tissue>
    </source>
</reference>
<reference key="18">
    <citation type="journal article" date="2014" name="J. Proteomics">
        <title>An enzyme assisted RP-RPLC approach for in-depth analysis of human liver phosphoproteome.</title>
        <authorList>
            <person name="Bian Y."/>
            <person name="Song C."/>
            <person name="Cheng K."/>
            <person name="Dong M."/>
            <person name="Wang F."/>
            <person name="Huang J."/>
            <person name="Sun D."/>
            <person name="Wang L."/>
            <person name="Ye M."/>
            <person name="Zou H."/>
        </authorList>
    </citation>
    <scope>IDENTIFICATION BY MASS SPECTROMETRY [LARGE SCALE ANALYSIS]</scope>
    <source>
        <tissue>Liver</tissue>
    </source>
</reference>
<reference key="19">
    <citation type="journal article" date="2014" name="Nature">
        <title>Analysis of orthologous groups reveals archease and DDX1 as tRNA splicing factors.</title>
        <authorList>
            <person name="Popow J."/>
            <person name="Jurkin J."/>
            <person name="Schleiffer A."/>
            <person name="Martinez J."/>
        </authorList>
    </citation>
    <scope>FUNCTION</scope>
    <scope>CATALYTIC ACTIVITY</scope>
    <scope>REACTION MECHANISM</scope>
    <scope>ACTIVITY REGULATION</scope>
    <scope>IDENTIFICATION IN THE TRNA SPLICING LIGASE COMPLEX</scope>
</reference>
<reference key="20">
    <citation type="journal article" date="2014" name="PLoS ONE">
        <title>hCLE/C14orf166 associates with DDX1-HSPC117-FAM98B in a novel transcription-dependent shuttling RNA-transporting complex.</title>
        <authorList>
            <person name="Perez-Gonzalez A."/>
            <person name="Pazo A."/>
            <person name="Navajas R."/>
            <person name="Ciordia S."/>
            <person name="Rodriguez-Frandsen A."/>
            <person name="Nieto A."/>
        </authorList>
    </citation>
    <scope>SUBCELLULAR LOCATION</scope>
</reference>
<reference key="21">
    <citation type="journal article" date="2015" name="Proteomics">
        <title>N-terminome analysis of the human mitochondrial proteome.</title>
        <authorList>
            <person name="Vaca Jacome A.S."/>
            <person name="Rabilloud T."/>
            <person name="Schaeffer-Reiss C."/>
            <person name="Rompais M."/>
            <person name="Ayoub D."/>
            <person name="Lane L."/>
            <person name="Bairoch A."/>
            <person name="Van Dorsselaer A."/>
            <person name="Carapito C."/>
        </authorList>
    </citation>
    <scope>IDENTIFICATION BY MASS SPECTROMETRY [LARGE SCALE ANALYSIS]</scope>
</reference>
<reference key="22">
    <citation type="journal article" date="2017" name="Nat. Struct. Mol. Biol.">
        <title>Site-specific mapping of the human SUMO proteome reveals co-modification with phosphorylation.</title>
        <authorList>
            <person name="Hendriks I.A."/>
            <person name="Lyon D."/>
            <person name="Young C."/>
            <person name="Jensen L.J."/>
            <person name="Vertegaal A.C."/>
            <person name="Nielsen M.L."/>
        </authorList>
    </citation>
    <scope>SUMOYLATION [LARGE SCALE ANALYSIS] AT LYS-496</scope>
    <scope>IDENTIFICATION BY MASS SPECTROMETRY [LARGE SCALE ANALYSIS]</scope>
</reference>
<dbReference type="EC" id="6.5.1.8" evidence="2 7 9"/>
<dbReference type="EMBL" id="AL050255">
    <property type="protein sequence ID" value="CAB43357.1"/>
    <property type="molecule type" value="mRNA"/>
</dbReference>
<dbReference type="EMBL" id="AF161466">
    <property type="protein sequence ID" value="AAF29081.1"/>
    <property type="status" value="ALT_FRAME"/>
    <property type="molecule type" value="mRNA"/>
</dbReference>
<dbReference type="EMBL" id="AF155658">
    <property type="protein sequence ID" value="AAF67477.1"/>
    <property type="status" value="ALT_FRAME"/>
    <property type="molecule type" value="mRNA"/>
</dbReference>
<dbReference type="EMBL" id="CR457175">
    <property type="protein sequence ID" value="CAG33456.1"/>
    <property type="molecule type" value="mRNA"/>
</dbReference>
<dbReference type="EMBL" id="CR456450">
    <property type="protein sequence ID" value="CAG30336.1"/>
    <property type="molecule type" value="mRNA"/>
</dbReference>
<dbReference type="EMBL" id="AK312503">
    <property type="protein sequence ID" value="BAG35405.1"/>
    <property type="molecule type" value="mRNA"/>
</dbReference>
<dbReference type="EMBL" id="AL021937">
    <property type="status" value="NOT_ANNOTATED_CDS"/>
    <property type="molecule type" value="Genomic_DNA"/>
</dbReference>
<dbReference type="EMBL" id="CH471095">
    <property type="protein sequence ID" value="EAW60021.1"/>
    <property type="molecule type" value="Genomic_DNA"/>
</dbReference>
<dbReference type="EMBL" id="BC000151">
    <property type="protein sequence ID" value="AAH00151.1"/>
    <property type="molecule type" value="mRNA"/>
</dbReference>
<dbReference type="EMBL" id="BC002970">
    <property type="protein sequence ID" value="AAH02970.1"/>
    <property type="molecule type" value="mRNA"/>
</dbReference>
<dbReference type="EMBL" id="BC010308">
    <property type="protein sequence ID" value="AAH10308.1"/>
    <property type="molecule type" value="mRNA"/>
</dbReference>
<dbReference type="EMBL" id="BC016707">
    <property type="protein sequence ID" value="AAH16707.1"/>
    <property type="molecule type" value="mRNA"/>
</dbReference>
<dbReference type="EMBL" id="AL137272">
    <property type="protein sequence ID" value="CAB70670.1"/>
    <property type="molecule type" value="mRNA"/>
</dbReference>
<dbReference type="CCDS" id="CCDS13905.1"/>
<dbReference type="PIR" id="T46344">
    <property type="entry name" value="T46344"/>
</dbReference>
<dbReference type="RefSeq" id="NP_055121.1">
    <property type="nucleotide sequence ID" value="NM_014306.5"/>
</dbReference>
<dbReference type="PDB" id="7P3B">
    <property type="method" value="X-ray"/>
    <property type="resolution" value="2.30 A"/>
    <property type="chains" value="A/B=2-505"/>
</dbReference>
<dbReference type="PDB" id="8BTT">
    <property type="method" value="X-ray"/>
    <property type="resolution" value="2.60 A"/>
    <property type="chains" value="A/B=1-505"/>
</dbReference>
<dbReference type="PDB" id="8ODO">
    <property type="method" value="X-ray"/>
    <property type="resolution" value="2.20 A"/>
    <property type="chains" value="A/C/E/G=1-505"/>
</dbReference>
<dbReference type="PDB" id="8ODP">
    <property type="method" value="X-ray"/>
    <property type="resolution" value="2.30 A"/>
    <property type="chains" value="A/C/E/G=1-505"/>
</dbReference>
<dbReference type="PDB" id="8ORJ">
    <property type="method" value="EM"/>
    <property type="resolution" value="3.30 A"/>
    <property type="chains" value="A=1-505"/>
</dbReference>
<dbReference type="PDBsum" id="7P3B"/>
<dbReference type="PDBsum" id="8BTT"/>
<dbReference type="PDBsum" id="8ODO"/>
<dbReference type="PDBsum" id="8ODP"/>
<dbReference type="PDBsum" id="8ORJ"/>
<dbReference type="EMDB" id="EMD-17127"/>
<dbReference type="SMR" id="Q9Y3I0"/>
<dbReference type="BioGRID" id="119569">
    <property type="interactions" value="381"/>
</dbReference>
<dbReference type="ComplexPortal" id="CPX-6411">
    <property type="entry name" value="tRNA-splicing ligase complex"/>
</dbReference>
<dbReference type="CORUM" id="Q9Y3I0"/>
<dbReference type="DIP" id="DIP-46750N"/>
<dbReference type="FunCoup" id="Q9Y3I0">
    <property type="interactions" value="2290"/>
</dbReference>
<dbReference type="IntAct" id="Q9Y3I0">
    <property type="interactions" value="131"/>
</dbReference>
<dbReference type="MINT" id="Q9Y3I0"/>
<dbReference type="STRING" id="9606.ENSP00000216038"/>
<dbReference type="DrugBank" id="DB02772">
    <property type="generic name" value="Sucrose"/>
</dbReference>
<dbReference type="GlyGen" id="Q9Y3I0">
    <property type="glycosylation" value="1 site, 1 O-linked glycan (1 site)"/>
</dbReference>
<dbReference type="iPTMnet" id="Q9Y3I0"/>
<dbReference type="MetOSite" id="Q9Y3I0"/>
<dbReference type="PhosphoSitePlus" id="Q9Y3I0"/>
<dbReference type="SwissPalm" id="Q9Y3I0"/>
<dbReference type="BioMuta" id="RTCB"/>
<dbReference type="DMDM" id="74753486"/>
<dbReference type="jPOST" id="Q9Y3I0"/>
<dbReference type="MassIVE" id="Q9Y3I0"/>
<dbReference type="PaxDb" id="9606-ENSP00000216038"/>
<dbReference type="PeptideAtlas" id="Q9Y3I0"/>
<dbReference type="ProteomicsDB" id="86038"/>
<dbReference type="Pumba" id="Q9Y3I0"/>
<dbReference type="Antibodypedia" id="261">
    <property type="antibodies" value="224 antibodies from 28 providers"/>
</dbReference>
<dbReference type="DNASU" id="51493"/>
<dbReference type="Ensembl" id="ENST00000216038.6">
    <property type="protein sequence ID" value="ENSP00000216038.5"/>
    <property type="gene ID" value="ENSG00000100220.12"/>
</dbReference>
<dbReference type="GeneID" id="51493"/>
<dbReference type="KEGG" id="hsa:51493"/>
<dbReference type="MANE-Select" id="ENST00000216038.6">
    <property type="protein sequence ID" value="ENSP00000216038.5"/>
    <property type="RefSeq nucleotide sequence ID" value="NM_014306.5"/>
    <property type="RefSeq protein sequence ID" value="NP_055121.1"/>
</dbReference>
<dbReference type="UCSC" id="uc003amm.3">
    <property type="organism name" value="human"/>
</dbReference>
<dbReference type="AGR" id="HGNC:26935"/>
<dbReference type="CTD" id="51493"/>
<dbReference type="DisGeNET" id="51493"/>
<dbReference type="GeneCards" id="RTCB"/>
<dbReference type="HGNC" id="HGNC:26935">
    <property type="gene designation" value="RTCB"/>
</dbReference>
<dbReference type="HPA" id="ENSG00000100220">
    <property type="expression patterns" value="Low tissue specificity"/>
</dbReference>
<dbReference type="MIM" id="613901">
    <property type="type" value="gene"/>
</dbReference>
<dbReference type="neXtProt" id="NX_Q9Y3I0"/>
<dbReference type="OpenTargets" id="ENSG00000100220"/>
<dbReference type="PharmGKB" id="PA145149387"/>
<dbReference type="VEuPathDB" id="HostDB:ENSG00000100220"/>
<dbReference type="eggNOG" id="KOG3833">
    <property type="taxonomic scope" value="Eukaryota"/>
</dbReference>
<dbReference type="GeneTree" id="ENSGT00940000155911"/>
<dbReference type="HOGENOM" id="CLU_022279_0_0_1"/>
<dbReference type="InParanoid" id="Q9Y3I0"/>
<dbReference type="OMA" id="QTRGVEC"/>
<dbReference type="OrthoDB" id="10249697at2759"/>
<dbReference type="PAN-GO" id="Q9Y3I0">
    <property type="GO annotations" value="4 GO annotations based on evolutionary models"/>
</dbReference>
<dbReference type="PhylomeDB" id="Q9Y3I0"/>
<dbReference type="TreeFam" id="TF314404"/>
<dbReference type="BioCyc" id="MetaCyc:ENSG00000100220-MONOMER"/>
<dbReference type="BRENDA" id="6.5.1.8">
    <property type="organism ID" value="2681"/>
</dbReference>
<dbReference type="PathwayCommons" id="Q9Y3I0"/>
<dbReference type="Reactome" id="R-HSA-6784531">
    <property type="pathway name" value="tRNA processing in the nucleus"/>
</dbReference>
<dbReference type="SignaLink" id="Q9Y3I0"/>
<dbReference type="BioGRID-ORCS" id="51493">
    <property type="hits" value="641 hits in 1140 CRISPR screens"/>
</dbReference>
<dbReference type="CD-CODE" id="232F8A39">
    <property type="entry name" value="P-body"/>
</dbReference>
<dbReference type="CD-CODE" id="91857CE7">
    <property type="entry name" value="Nucleolus"/>
</dbReference>
<dbReference type="CD-CODE" id="DEE660B4">
    <property type="entry name" value="Stress granule"/>
</dbReference>
<dbReference type="CD-CODE" id="FB4E32DD">
    <property type="entry name" value="Presynaptic clusters and postsynaptic densities"/>
</dbReference>
<dbReference type="ChiTaRS" id="RTCB">
    <property type="organism name" value="human"/>
</dbReference>
<dbReference type="GenomeRNAi" id="51493"/>
<dbReference type="Pharos" id="Q9Y3I0">
    <property type="development level" value="Tbio"/>
</dbReference>
<dbReference type="PRO" id="PR:Q9Y3I0"/>
<dbReference type="Proteomes" id="UP000005640">
    <property type="component" value="Chromosome 22"/>
</dbReference>
<dbReference type="RNAct" id="Q9Y3I0">
    <property type="molecule type" value="protein"/>
</dbReference>
<dbReference type="Bgee" id="ENSG00000100220">
    <property type="expression patterns" value="Expressed in jejunal mucosa and 216 other cell types or tissues"/>
</dbReference>
<dbReference type="GO" id="GO:0005737">
    <property type="term" value="C:cytoplasm"/>
    <property type="evidence" value="ECO:0000314"/>
    <property type="project" value="UniProtKB"/>
</dbReference>
<dbReference type="GO" id="GO:0005829">
    <property type="term" value="C:cytosol"/>
    <property type="evidence" value="ECO:0000314"/>
    <property type="project" value="HPA"/>
</dbReference>
<dbReference type="GO" id="GO:0005789">
    <property type="term" value="C:endoplasmic reticulum membrane"/>
    <property type="evidence" value="ECO:0007669"/>
    <property type="project" value="Ensembl"/>
</dbReference>
<dbReference type="GO" id="GO:0043231">
    <property type="term" value="C:intracellular membrane-bounded organelle"/>
    <property type="evidence" value="ECO:0000314"/>
    <property type="project" value="HPA"/>
</dbReference>
<dbReference type="GO" id="GO:0005635">
    <property type="term" value="C:nuclear envelope"/>
    <property type="evidence" value="ECO:0007669"/>
    <property type="project" value="Ensembl"/>
</dbReference>
<dbReference type="GO" id="GO:0005654">
    <property type="term" value="C:nucleoplasm"/>
    <property type="evidence" value="ECO:0000314"/>
    <property type="project" value="HPA"/>
</dbReference>
<dbReference type="GO" id="GO:0005634">
    <property type="term" value="C:nucleus"/>
    <property type="evidence" value="ECO:0000314"/>
    <property type="project" value="UniProtKB"/>
</dbReference>
<dbReference type="GO" id="GO:0072669">
    <property type="term" value="C:tRNA-splicing ligase complex"/>
    <property type="evidence" value="ECO:0000314"/>
    <property type="project" value="UniProtKB"/>
</dbReference>
<dbReference type="GO" id="GO:0005525">
    <property type="term" value="F:GTP binding"/>
    <property type="evidence" value="ECO:0007669"/>
    <property type="project" value="UniProtKB-KW"/>
</dbReference>
<dbReference type="GO" id="GO:0046872">
    <property type="term" value="F:metal ion binding"/>
    <property type="evidence" value="ECO:0007669"/>
    <property type="project" value="UniProtKB-KW"/>
</dbReference>
<dbReference type="GO" id="GO:0003723">
    <property type="term" value="F:RNA binding"/>
    <property type="evidence" value="ECO:0007005"/>
    <property type="project" value="UniProtKB"/>
</dbReference>
<dbReference type="GO" id="GO:0170057">
    <property type="term" value="F:RNA ligase (GTP) activity"/>
    <property type="evidence" value="ECO:0000314"/>
    <property type="project" value="UniProtKB"/>
</dbReference>
<dbReference type="GO" id="GO:0017166">
    <property type="term" value="F:vinculin binding"/>
    <property type="evidence" value="ECO:0000353"/>
    <property type="project" value="UniProtKB"/>
</dbReference>
<dbReference type="GO" id="GO:0001701">
    <property type="term" value="P:in utero embryonic development"/>
    <property type="evidence" value="ECO:0007669"/>
    <property type="project" value="Ensembl"/>
</dbReference>
<dbReference type="GO" id="GO:0001890">
    <property type="term" value="P:placenta development"/>
    <property type="evidence" value="ECO:0007669"/>
    <property type="project" value="Ensembl"/>
</dbReference>
<dbReference type="GO" id="GO:0006388">
    <property type="term" value="P:tRNA splicing, via endonucleolytic cleavage and ligation"/>
    <property type="evidence" value="ECO:0000314"/>
    <property type="project" value="UniProtKB"/>
</dbReference>
<dbReference type="FunFam" id="3.90.1860.10:FF:000001">
    <property type="entry name" value="tRNA-splicing ligase RtcB homolog"/>
    <property type="match status" value="1"/>
</dbReference>
<dbReference type="Gene3D" id="3.90.1860.10">
    <property type="entry name" value="tRNA-splicing ligase RtcB"/>
    <property type="match status" value="1"/>
</dbReference>
<dbReference type="HAMAP" id="MF_03144">
    <property type="entry name" value="RtcB_euk"/>
    <property type="match status" value="1"/>
</dbReference>
<dbReference type="InterPro" id="IPR001233">
    <property type="entry name" value="RtcB"/>
</dbReference>
<dbReference type="InterPro" id="IPR036025">
    <property type="entry name" value="RtcB-like_sf"/>
</dbReference>
<dbReference type="InterPro" id="IPR027513">
    <property type="entry name" value="RtcB_euk"/>
</dbReference>
<dbReference type="PANTHER" id="PTHR11118">
    <property type="entry name" value="RNA-SPLICING LIGASE RTCB HOMOLOG"/>
    <property type="match status" value="1"/>
</dbReference>
<dbReference type="PANTHER" id="PTHR11118:SF1">
    <property type="entry name" value="RNA-SPLICING LIGASE RTCB HOMOLOG"/>
    <property type="match status" value="1"/>
</dbReference>
<dbReference type="Pfam" id="PF01139">
    <property type="entry name" value="RtcB"/>
    <property type="match status" value="1"/>
</dbReference>
<dbReference type="SUPFAM" id="SSF103365">
    <property type="entry name" value="Hypothetical protein PH1602"/>
    <property type="match status" value="1"/>
</dbReference>
<dbReference type="PROSITE" id="PS01288">
    <property type="entry name" value="UPF0027"/>
    <property type="match status" value="1"/>
</dbReference>
<proteinExistence type="evidence at protein level"/>
<sequence length="505" mass="55210">MSRSYNDELQFLEKINKNCWRIKKGFVPNMQVEGVFYVNDALEKLMFEELRNACRGGGVGGFLPAMKQIGNVAALPGIVHRSIGLPDVHSGYGFAIGNMAAFDMNDPEAVVSPGGVGFDINCGVRLLRTNLDESDVQPVKEQLAQAMFDHIPVGVGSKGVIPMNAKDLEEALEMGVDWSLREGYAWAEDKEHCEEYGRMLQADPNKVSARAKKRGLPQLGTLGAGNHYAEIQVVDEIFNEYAAKKMGIDHKGQVCVMIHSGSRGLGHQVATDALVAMEKAMKRDKIIVNDRQLACARIASPEGQDYLKGMAAAGNYAWVNRSSMTFLTRQAFAKVFNTTPDDLDLHVIYDVSHNIAKVEQHVVDGKERTLLVHRKGSTRAFPPHHPLIAVDYQLTGQPVLIGGTMGTCSYVLTGTEQGMTETFGTTCHGAGRALSRAKSRRNLDFQDVLDKLADMGIAIRVASPKLVMEEAPESYKNVTDVVNTCHDAGISKKAIKLRPIAVIKG</sequence>
<evidence type="ECO:0000250" key="1">
    <source>
        <dbReference type="UniProtKB" id="O59245"/>
    </source>
</evidence>
<evidence type="ECO:0000255" key="2">
    <source>
        <dbReference type="HAMAP-Rule" id="MF_03144"/>
    </source>
</evidence>
<evidence type="ECO:0000269" key="3">
    <source>
    </source>
</evidence>
<evidence type="ECO:0000269" key="4">
    <source>
    </source>
</evidence>
<evidence type="ECO:0000269" key="5">
    <source>
    </source>
</evidence>
<evidence type="ECO:0000269" key="6">
    <source>
    </source>
</evidence>
<evidence type="ECO:0000269" key="7">
    <source>
    </source>
</evidence>
<evidence type="ECO:0000305" key="8"/>
<evidence type="ECO:0000305" key="9">
    <source>
    </source>
</evidence>
<evidence type="ECO:0000305" key="10">
    <source>
    </source>
</evidence>
<evidence type="ECO:0007744" key="11">
    <source>
    </source>
</evidence>
<evidence type="ECO:0007744" key="12">
    <source>
    </source>
</evidence>
<evidence type="ECO:0007829" key="13">
    <source>
        <dbReference type="PDB" id="8ODO"/>
    </source>
</evidence>
<organism>
    <name type="scientific">Homo sapiens</name>
    <name type="common">Human</name>
    <dbReference type="NCBI Taxonomy" id="9606"/>
    <lineage>
        <taxon>Eukaryota</taxon>
        <taxon>Metazoa</taxon>
        <taxon>Chordata</taxon>
        <taxon>Craniata</taxon>
        <taxon>Vertebrata</taxon>
        <taxon>Euteleostomi</taxon>
        <taxon>Mammalia</taxon>
        <taxon>Eutheria</taxon>
        <taxon>Euarchontoglires</taxon>
        <taxon>Primates</taxon>
        <taxon>Haplorrhini</taxon>
        <taxon>Catarrhini</taxon>
        <taxon>Hominidae</taxon>
        <taxon>Homo</taxon>
    </lineage>
</organism>
<gene>
    <name evidence="2" type="primary">RTCB</name>
    <name type="synonym">C22orf28</name>
    <name type="ORF">HSPC117</name>
</gene>
<comment type="function">
    <text evidence="2 5 7">Catalytic subunit of the tRNA-splicing ligase complex that acts by directly joining spliced tRNA halves to mature-sized tRNAs by incorporating the precursor-derived splice junction phosphate into the mature tRNA as a canonical 3',5'-phosphodiester. May act as an RNA ligase with broad substrate specificity, and may function toward other RNAs.</text>
</comment>
<comment type="catalytic activity">
    <reaction evidence="2 7 9">
        <text>a 3'-end 3'-phospho-ribonucleotide-RNA + a 5'-end dephospho-ribonucleoside-RNA + GTP = a ribonucleotidyl-ribonucleotide-RNA + GMP + diphosphate</text>
        <dbReference type="Rhea" id="RHEA:68076"/>
        <dbReference type="Rhea" id="RHEA-COMP:10463"/>
        <dbReference type="Rhea" id="RHEA-COMP:13936"/>
        <dbReference type="Rhea" id="RHEA-COMP:17355"/>
        <dbReference type="ChEBI" id="CHEBI:33019"/>
        <dbReference type="ChEBI" id="CHEBI:37565"/>
        <dbReference type="ChEBI" id="CHEBI:58115"/>
        <dbReference type="ChEBI" id="CHEBI:83062"/>
        <dbReference type="ChEBI" id="CHEBI:138284"/>
        <dbReference type="ChEBI" id="CHEBI:173118"/>
        <dbReference type="EC" id="6.5.1.8"/>
    </reaction>
</comment>
<comment type="catalytic activity">
    <reaction evidence="2 7 9">
        <text>a 3'-end 2',3'-cyclophospho-ribonucleotide-RNA + a 5'-end dephospho-ribonucleoside-RNA + GTP + H2O = a ribonucleotidyl-ribonucleotide-RNA + GMP + diphosphate + H(+)</text>
        <dbReference type="Rhea" id="RHEA:68080"/>
        <dbReference type="Rhea" id="RHEA-COMP:10464"/>
        <dbReference type="Rhea" id="RHEA-COMP:13936"/>
        <dbReference type="Rhea" id="RHEA-COMP:17355"/>
        <dbReference type="ChEBI" id="CHEBI:15377"/>
        <dbReference type="ChEBI" id="CHEBI:15378"/>
        <dbReference type="ChEBI" id="CHEBI:33019"/>
        <dbReference type="ChEBI" id="CHEBI:37565"/>
        <dbReference type="ChEBI" id="CHEBI:58115"/>
        <dbReference type="ChEBI" id="CHEBI:83064"/>
        <dbReference type="ChEBI" id="CHEBI:138284"/>
        <dbReference type="ChEBI" id="CHEBI:173118"/>
        <dbReference type="EC" id="6.5.1.8"/>
    </reaction>
</comment>
<comment type="cofactor">
    <cofactor evidence="1 2">
        <name>Mn(2+)</name>
        <dbReference type="ChEBI" id="CHEBI:29035"/>
    </cofactor>
    <text evidence="1 2">Binds 2 manganese ions per subunit.</text>
</comment>
<comment type="activity regulation">
    <text evidence="7">Protein archease stimulates the activity of the tRNA ligase complex with high efficiency in the presence of GTP.</text>
</comment>
<comment type="subunit">
    <text evidence="2 3 5 7">Catalytic component of the tRNA-splicing ligase complex.</text>
</comment>
<comment type="interaction">
    <interactant intactId="EBI-2107208">
        <id>Q9Y3I0</id>
    </interactant>
    <interactant intactId="EBI-741243">
        <id>Q9UKG1</id>
        <label>APPL1</label>
    </interactant>
    <organismsDiffer>false</organismsDiffer>
    <experiments>3</experiments>
</comment>
<comment type="interaction">
    <interactant intactId="EBI-2107208">
        <id>Q9Y3I0</id>
    </interactant>
    <interactant intactId="EBI-1104547">
        <id>Q9Y224</id>
        <label>RTRAF</label>
    </interactant>
    <organismsDiffer>false</organismsDiffer>
    <experiments>5</experiments>
</comment>
<comment type="interaction">
    <interactant intactId="EBI-2107208">
        <id>Q9Y3I0</id>
    </interactant>
    <interactant intactId="EBI-2808825">
        <id>Q8IWT0</id>
        <label>ZBTB8OS</label>
    </interactant>
    <organismsDiffer>false</organismsDiffer>
    <experiments>2</experiments>
</comment>
<comment type="subcellular location">
    <subcellularLocation>
        <location evidence="6">Nucleus</location>
    </subcellularLocation>
    <subcellularLocation>
        <location evidence="2 6">Cytoplasm</location>
    </subcellularLocation>
    <text evidence="6">Enters into the nucleus in case of active transcription while it accumulates in cytosol when transcription level is low.</text>
</comment>
<comment type="miscellaneous">
    <text evidence="2 10">Ligation probably proceeds through 3 nucleotidyl transfer steps, with 2',3'-cyclic phosphate termini being hydrolyzed to 3'-P termini in a step that precedes 3'-P activation with GMP. In the first nucleotidyl transfer step, RTCB reacts with GTP to form a covalent RTCB-histidine-GMP intermediate with release of PPi; in the second step, the GMP moiety is transferred to the RNA 3'-P; in the third step, the 5'-OH from the opposite RNA strand attacks the activated 3'-P to form a 3',5'-phosphodiester bond and release GMP.</text>
</comment>
<comment type="similarity">
    <text evidence="2">Belongs to the RtcB family.</text>
</comment>
<comment type="sequence caution" evidence="8">
    <conflict type="frameshift">
        <sequence resource="EMBL-CDS" id="AAF29081"/>
    </conflict>
</comment>
<comment type="sequence caution" evidence="8">
    <conflict type="frameshift">
        <sequence resource="EMBL-CDS" id="AAF67477"/>
    </conflict>
</comment>
<protein>
    <recommendedName>
        <fullName evidence="2 8">RNA-splicing ligase RtcB homolog</fullName>
        <ecNumber evidence="2 7 9">6.5.1.8</ecNumber>
    </recommendedName>
    <alternativeName>
        <fullName evidence="2 8">3'-phosphate/5'-hydroxy nucleic acid ligase</fullName>
    </alternativeName>
</protein>
<accession>Q9Y3I0</accession>
<accession>B2R6A8</accession>
<accession>Q6IAI0</accession>
<accession>Q9BWL4</accession>
<accession>Q9NTH1</accession>
<accession>Q9P037</accession>
<accession>Q9P0J3</accession>
<name>RTCB_HUMAN</name>